<evidence type="ECO:0000256" key="1">
    <source>
        <dbReference type="SAM" id="MobiDB-lite"/>
    </source>
</evidence>
<evidence type="ECO:0000305" key="2"/>
<feature type="chain" id="PRO_0000379004" description="FHIP family protein AAEL005291">
    <location>
        <begin position="1"/>
        <end position="1042"/>
    </location>
</feature>
<feature type="region of interest" description="Disordered" evidence="1">
    <location>
        <begin position="1"/>
        <end position="31"/>
    </location>
</feature>
<feature type="region of interest" description="Disordered" evidence="1">
    <location>
        <begin position="494"/>
        <end position="514"/>
    </location>
</feature>
<feature type="region of interest" description="Disordered" evidence="1">
    <location>
        <begin position="821"/>
        <end position="866"/>
    </location>
</feature>
<feature type="region of interest" description="Disordered" evidence="1">
    <location>
        <begin position="905"/>
        <end position="977"/>
    </location>
</feature>
<feature type="compositionally biased region" description="Polar residues" evidence="1">
    <location>
        <begin position="1"/>
        <end position="14"/>
    </location>
</feature>
<feature type="compositionally biased region" description="Polar residues" evidence="1">
    <location>
        <begin position="839"/>
        <end position="859"/>
    </location>
</feature>
<feature type="compositionally biased region" description="Low complexity" evidence="1">
    <location>
        <begin position="905"/>
        <end position="940"/>
    </location>
</feature>
<feature type="compositionally biased region" description="Low complexity" evidence="1">
    <location>
        <begin position="956"/>
        <end position="976"/>
    </location>
</feature>
<accession>Q17AI4</accession>
<keyword id="KW-1185">Reference proteome</keyword>
<dbReference type="EMBL" id="CH477335">
    <property type="protein sequence ID" value="EAT43238.1"/>
    <property type="molecule type" value="Genomic_DNA"/>
</dbReference>
<dbReference type="RefSeq" id="XP_001650683.1">
    <property type="nucleotide sequence ID" value="XM_001650633.1"/>
</dbReference>
<dbReference type="SMR" id="Q17AI4"/>
<dbReference type="FunCoup" id="Q17AI4">
    <property type="interactions" value="59"/>
</dbReference>
<dbReference type="STRING" id="7159.Q17AI4"/>
<dbReference type="PaxDb" id="7159-AAEL005291-PA"/>
<dbReference type="GeneID" id="5566304"/>
<dbReference type="KEGG" id="aag:5566304"/>
<dbReference type="VEuPathDB" id="VectorBase:AAEL022240"/>
<dbReference type="eggNOG" id="KOG3695">
    <property type="taxonomic scope" value="Eukaryota"/>
</dbReference>
<dbReference type="HOGENOM" id="CLU_007807_0_0_1"/>
<dbReference type="InParanoid" id="Q17AI4"/>
<dbReference type="OMA" id="QQTHTEC"/>
<dbReference type="OrthoDB" id="6287422at2759"/>
<dbReference type="PhylomeDB" id="Q17AI4"/>
<dbReference type="Proteomes" id="UP000008820">
    <property type="component" value="Unassembled WGS sequence"/>
</dbReference>
<dbReference type="Proteomes" id="UP000682892">
    <property type="component" value="Unassembled WGS sequence"/>
</dbReference>
<dbReference type="InterPro" id="IPR019384">
    <property type="entry name" value="FHIP"/>
</dbReference>
<dbReference type="InterPro" id="IPR045669">
    <property type="entry name" value="FHIP_C"/>
</dbReference>
<dbReference type="InterPro" id="IPR045668">
    <property type="entry name" value="FHIP_KELAA_motif"/>
</dbReference>
<dbReference type="PANTHER" id="PTHR21705:SF11">
    <property type="entry name" value="FHIP FAMILY PROTEIN CG3558"/>
    <property type="match status" value="1"/>
</dbReference>
<dbReference type="PANTHER" id="PTHR21705">
    <property type="entry name" value="RAI16 PROTEIN-RELATED"/>
    <property type="match status" value="1"/>
</dbReference>
<dbReference type="Pfam" id="PF19314">
    <property type="entry name" value="DUF5917"/>
    <property type="match status" value="1"/>
</dbReference>
<dbReference type="Pfam" id="PF19311">
    <property type="entry name" value="KELAA"/>
    <property type="match status" value="1"/>
</dbReference>
<dbReference type="Pfam" id="PF10257">
    <property type="entry name" value="RAI16-like"/>
    <property type="match status" value="1"/>
</dbReference>
<reference key="1">
    <citation type="journal article" date="2007" name="Science">
        <title>Genome sequence of Aedes aegypti, a major arbovirus vector.</title>
        <authorList>
            <person name="Nene V."/>
            <person name="Wortman J.R."/>
            <person name="Lawson D."/>
            <person name="Haas B.J."/>
            <person name="Kodira C.D."/>
            <person name="Tu Z.J."/>
            <person name="Loftus B.J."/>
            <person name="Xi Z."/>
            <person name="Megy K."/>
            <person name="Grabherr M."/>
            <person name="Ren Q."/>
            <person name="Zdobnov E.M."/>
            <person name="Lobo N.F."/>
            <person name="Campbell K.S."/>
            <person name="Brown S.E."/>
            <person name="Bonaldo M.F."/>
            <person name="Zhu J."/>
            <person name="Sinkins S.P."/>
            <person name="Hogenkamp D.G."/>
            <person name="Amedeo P."/>
            <person name="Arensburger P."/>
            <person name="Atkinson P.W."/>
            <person name="Bidwell S.L."/>
            <person name="Biedler J."/>
            <person name="Birney E."/>
            <person name="Bruggner R.V."/>
            <person name="Costas J."/>
            <person name="Coy M.R."/>
            <person name="Crabtree J."/>
            <person name="Crawford M."/>
            <person name="DeBruyn B."/>
            <person name="DeCaprio D."/>
            <person name="Eiglmeier K."/>
            <person name="Eisenstadt E."/>
            <person name="El-Dorry H."/>
            <person name="Gelbart W.M."/>
            <person name="Gomes S.L."/>
            <person name="Hammond M."/>
            <person name="Hannick L.I."/>
            <person name="Hogan J.R."/>
            <person name="Holmes M.H."/>
            <person name="Jaffe D."/>
            <person name="Johnston S.J."/>
            <person name="Kennedy R.C."/>
            <person name="Koo H."/>
            <person name="Kravitz S."/>
            <person name="Kriventseva E.V."/>
            <person name="Kulp D."/>
            <person name="Labutti K."/>
            <person name="Lee E."/>
            <person name="Li S."/>
            <person name="Lovin D.D."/>
            <person name="Mao C."/>
            <person name="Mauceli E."/>
            <person name="Menck C.F."/>
            <person name="Miller J.R."/>
            <person name="Montgomery P."/>
            <person name="Mori A."/>
            <person name="Nascimento A.L."/>
            <person name="Naveira H.F."/>
            <person name="Nusbaum C."/>
            <person name="O'Leary S.B."/>
            <person name="Orvis J."/>
            <person name="Pertea M."/>
            <person name="Quesneville H."/>
            <person name="Reidenbach K.R."/>
            <person name="Rogers Y.-H.C."/>
            <person name="Roth C.W."/>
            <person name="Schneider J.R."/>
            <person name="Schatz M."/>
            <person name="Shumway M."/>
            <person name="Stanke M."/>
            <person name="Stinson E.O."/>
            <person name="Tubio J.M.C."/>
            <person name="Vanzee J.P."/>
            <person name="Verjovski-Almeida S."/>
            <person name="Werner D."/>
            <person name="White O.R."/>
            <person name="Wyder S."/>
            <person name="Zeng Q."/>
            <person name="Zhao Q."/>
            <person name="Zhao Y."/>
            <person name="Hill C.A."/>
            <person name="Raikhel A.S."/>
            <person name="Soares M.B."/>
            <person name="Knudson D.L."/>
            <person name="Lee N.H."/>
            <person name="Galagan J."/>
            <person name="Salzberg S.L."/>
            <person name="Paulsen I.T."/>
            <person name="Dimopoulos G."/>
            <person name="Collins F.H."/>
            <person name="Bruce B."/>
            <person name="Fraser-Liggett C.M."/>
            <person name="Severson D.W."/>
        </authorList>
    </citation>
    <scope>NUCLEOTIDE SEQUENCE [LARGE SCALE GENOMIC DNA]</scope>
    <source>
        <strain>LVPib12</strain>
    </source>
</reference>
<comment type="similarity">
    <text evidence="2">Belongs to the FHIP family.</text>
</comment>
<organism>
    <name type="scientific">Aedes aegypti</name>
    <name type="common">Yellowfever mosquito</name>
    <name type="synonym">Culex aegypti</name>
    <dbReference type="NCBI Taxonomy" id="7159"/>
    <lineage>
        <taxon>Eukaryota</taxon>
        <taxon>Metazoa</taxon>
        <taxon>Ecdysozoa</taxon>
        <taxon>Arthropoda</taxon>
        <taxon>Hexapoda</taxon>
        <taxon>Insecta</taxon>
        <taxon>Pterygota</taxon>
        <taxon>Neoptera</taxon>
        <taxon>Endopterygota</taxon>
        <taxon>Diptera</taxon>
        <taxon>Nematocera</taxon>
        <taxon>Culicoidea</taxon>
        <taxon>Culicidae</taxon>
        <taxon>Culicinae</taxon>
        <taxon>Aedini</taxon>
        <taxon>Aedes</taxon>
        <taxon>Stegomyia</taxon>
    </lineage>
</organism>
<protein>
    <recommendedName>
        <fullName>FHIP family protein AAEL005291</fullName>
    </recommendedName>
</protein>
<proteinExistence type="inferred from homology"/>
<gene>
    <name type="ORF">AAEL005291</name>
</gene>
<sequence>MSWLRSSPLRQSFSKAGGGSGSGASSRGGNSTNGTVRAFDASECDPKACYDSFCIHWQQAFEIIQRSENNRGQSHDDVLGVVTHLDHMVTLLLVELHHCNKVGLPGAPAPPAPCLEHLLSENLLDKLYEWGVKTGRYANAVRLEQLKLYEQLVSHSRHQLLVHEPFLRPLLKILASSQNEIYPPDVEKRLVILLNQLCVVLMQNVHLLDLFFFSTAQQNGSGGHANFIIFSLLIPYVHQEGSLGHQARDALLLCMACPRRLDRGTYIATYSSICPVWFTRAGEGLYSRLPNQIDIKTIDWYRITTDDVTELQELTLFMNSLEFCNAVVQVAHSMIRQQLLDFLYQGFLVPVLGPAVLQTNVESQISAMAYLDLIVRSVTEPGLIQIVVKFLLDEEKFDGQRILDVLVERLNSNDTRLCMVSLSLFDTLLSLNCEDIMLELALKYLLNCQHVPISHRFKVNRVDPYSNAVEYFLNTSPDIMKKVNNVLNINNNNNNTSQASSMLGSGPSSMPQGGRNVSKTIGANWNHYGNNTGETLMANYQAYLLEARNRIVQCKHACDQWNNVYRYQKLSKLVNNSSSLSHSGNGTAGSEDVRTYKVQMIKNFLAEFTTAPDSAVDMAGDGDRSSLCQSPAGMFGTGHHASHLMATTSKQLDSLQSLGDSSGYESLNITNLGTGSEDGRRHEAWKVSSVKEETIVDLDLSEDLFAQGTVSLGPFLTAIWGKLQTFTSNCLYVNLHLTGLISHLAWFPLPLLHSILLRPDIPTTSDTPSFHQVLKILKQQIDAELPDCDESLEIVDVARSFLVDREFRLINMRKNAIESNPHSGKLLLPNGATGASGPVSMTSNLSQTTPMQLTPSSSYDPFKRNDTKRKSISNSFSSIFRRPGSSASSGLAQVFQFFTGGGSSSNSSSISHQSSSTPSPAGSQQYLSSNSSGVSSFMGSSRRESREAETQFVDHPSIGGPPSSMGPTSLTSTGSPHNSLEYSLVNINGSIVGGIGSERQRDLAVSAVVLDEWLKELAAITQEQCIIMISDQVSSQKPGKLS</sequence>
<name>U518_AEDAE</name>